<proteinExistence type="inferred from homology"/>
<reference key="1">
    <citation type="journal article" date="2009" name="Appl. Environ. Microbiol.">
        <title>Rhizobium sp. strain NGR234 possesses a remarkable number of secretion systems.</title>
        <authorList>
            <person name="Schmeisser C."/>
            <person name="Liesegang H."/>
            <person name="Krysciak D."/>
            <person name="Bakkou N."/>
            <person name="Le Quere A."/>
            <person name="Wollherr A."/>
            <person name="Heinemeyer I."/>
            <person name="Morgenstern B."/>
            <person name="Pommerening-Roeser A."/>
            <person name="Flores M."/>
            <person name="Palacios R."/>
            <person name="Brenner S."/>
            <person name="Gottschalk G."/>
            <person name="Schmitz R.A."/>
            <person name="Broughton W.J."/>
            <person name="Perret X."/>
            <person name="Strittmatter A.W."/>
            <person name="Streit W.R."/>
        </authorList>
    </citation>
    <scope>NUCLEOTIDE SEQUENCE [LARGE SCALE GENOMIC DNA]</scope>
    <source>
        <strain>NBRC 101917 / NGR234</strain>
    </source>
</reference>
<name>Y2839_SINFN</name>
<accession>C3MIM2</accession>
<organism>
    <name type="scientific">Sinorhizobium fredii (strain NBRC 101917 / NGR234)</name>
    <dbReference type="NCBI Taxonomy" id="394"/>
    <lineage>
        <taxon>Bacteria</taxon>
        <taxon>Pseudomonadati</taxon>
        <taxon>Pseudomonadota</taxon>
        <taxon>Alphaproteobacteria</taxon>
        <taxon>Hyphomicrobiales</taxon>
        <taxon>Rhizobiaceae</taxon>
        <taxon>Sinorhizobium/Ensifer group</taxon>
        <taxon>Sinorhizobium</taxon>
    </lineage>
</organism>
<comment type="similarity">
    <text evidence="1">Belongs to the UPF0335 family.</text>
</comment>
<evidence type="ECO:0000255" key="1">
    <source>
        <dbReference type="HAMAP-Rule" id="MF_00797"/>
    </source>
</evidence>
<feature type="chain" id="PRO_1000148524" description="UPF0335 protein NGR_c28390">
    <location>
        <begin position="1"/>
        <end position="88"/>
    </location>
</feature>
<gene>
    <name type="ordered locus">NGR_c28390</name>
</gene>
<keyword id="KW-1185">Reference proteome</keyword>
<sequence length="88" mass="10004">MSDAQGFARDQLRAFIERIERLEEEKKTIADDIKDVYGEAKSMGFDTKILRKVISIRKQDADERLEQEAILDTYLQALGMVPAAEEAA</sequence>
<dbReference type="EMBL" id="CP001389">
    <property type="protein sequence ID" value="ACP26585.1"/>
    <property type="molecule type" value="Genomic_DNA"/>
</dbReference>
<dbReference type="RefSeq" id="WP_012709341.1">
    <property type="nucleotide sequence ID" value="NC_012587.1"/>
</dbReference>
<dbReference type="RefSeq" id="YP_002827338.1">
    <property type="nucleotide sequence ID" value="NC_012587.1"/>
</dbReference>
<dbReference type="SMR" id="C3MIM2"/>
<dbReference type="STRING" id="394.NGR_c28390"/>
<dbReference type="KEGG" id="rhi:NGR_c28390"/>
<dbReference type="PATRIC" id="fig|394.7.peg.5675"/>
<dbReference type="eggNOG" id="COG3750">
    <property type="taxonomic scope" value="Bacteria"/>
</dbReference>
<dbReference type="HOGENOM" id="CLU_158651_3_0_5"/>
<dbReference type="OrthoDB" id="9813793at2"/>
<dbReference type="Proteomes" id="UP000001054">
    <property type="component" value="Chromosome"/>
</dbReference>
<dbReference type="GO" id="GO:0003677">
    <property type="term" value="F:DNA binding"/>
    <property type="evidence" value="ECO:0007669"/>
    <property type="project" value="InterPro"/>
</dbReference>
<dbReference type="HAMAP" id="MF_00797">
    <property type="entry name" value="UPF0335"/>
    <property type="match status" value="1"/>
</dbReference>
<dbReference type="InterPro" id="IPR018753">
    <property type="entry name" value="GapR-like"/>
</dbReference>
<dbReference type="InterPro" id="IPR046367">
    <property type="entry name" value="GapR-like_DNA-bd"/>
</dbReference>
<dbReference type="NCBIfam" id="NF010247">
    <property type="entry name" value="PRK13694.1"/>
    <property type="match status" value="1"/>
</dbReference>
<dbReference type="Pfam" id="PF10073">
    <property type="entry name" value="GapR_DNA-bd"/>
    <property type="match status" value="1"/>
</dbReference>
<protein>
    <recommendedName>
        <fullName evidence="1">UPF0335 protein NGR_c28390</fullName>
    </recommendedName>
</protein>